<organism>
    <name type="scientific">Arabidopsis thaliana</name>
    <name type="common">Mouse-ear cress</name>
    <dbReference type="NCBI Taxonomy" id="3702"/>
    <lineage>
        <taxon>Eukaryota</taxon>
        <taxon>Viridiplantae</taxon>
        <taxon>Streptophyta</taxon>
        <taxon>Embryophyta</taxon>
        <taxon>Tracheophyta</taxon>
        <taxon>Spermatophyta</taxon>
        <taxon>Magnoliopsida</taxon>
        <taxon>eudicotyledons</taxon>
        <taxon>Gunneridae</taxon>
        <taxon>Pentapetalae</taxon>
        <taxon>rosids</taxon>
        <taxon>malvids</taxon>
        <taxon>Brassicales</taxon>
        <taxon>Brassicaceae</taxon>
        <taxon>Camelineae</taxon>
        <taxon>Arabidopsis</taxon>
    </lineage>
</organism>
<comment type="function">
    <text evidence="3">Probable transcription factor involved in phosphate homeostasis. Involved in the regulation of the developmental response of lateral roots, acquisition and/or mobilization of phosphate and expression of a subset of genes involved in phosphate sensing and signaling pathway. Is a target of the transcription factor PHR1.</text>
</comment>
<comment type="interaction">
    <interactant intactId="EBI-4429217">
        <id>Q8VZS3</id>
    </interactant>
    <interactant intactId="EBI-966009">
        <id>O80340</id>
        <label>ERF4</label>
    </interactant>
    <organismsDiffer>false</organismsDiffer>
    <experiments>3</experiments>
</comment>
<comment type="interaction">
    <interactant intactId="EBI-4429217">
        <id>Q8VZS3</id>
    </interactant>
    <interactant intactId="EBI-2000137">
        <id>Q9MAI5</id>
        <label>ERF8</label>
    </interactant>
    <organismsDiffer>false</organismsDiffer>
    <experiments>3</experiments>
</comment>
<comment type="interaction">
    <interactant intactId="EBI-4429217">
        <id>Q8VZS3</id>
    </interactant>
    <interactant intactId="EBI-632243">
        <id>P93830</id>
        <label>IAA17</label>
    </interactant>
    <organismsDiffer>false</organismsDiffer>
    <experiments>3</experiments>
</comment>
<comment type="interaction">
    <interactant intactId="EBI-4429217">
        <id>Q8VZS3</id>
    </interactant>
    <interactant intactId="EBI-541115">
        <id>Q9FNZ4</id>
        <label>NIMIN-3</label>
    </interactant>
    <organismsDiffer>false</organismsDiffer>
    <experiments>3</experiments>
</comment>
<comment type="interaction">
    <interactant intactId="EBI-4429217">
        <id>Q8VZS3</id>
    </interactant>
    <interactant intactId="EBI-395803">
        <id>Q9XGN1</id>
        <label>TTG1</label>
    </interactant>
    <organismsDiffer>false</organismsDiffer>
    <experiments>3</experiments>
</comment>
<comment type="subcellular location">
    <subcellularLocation>
        <location evidence="1 3">Nucleus</location>
    </subcellularLocation>
</comment>
<comment type="induction">
    <text evidence="3">Induced under phosphate deprivation conditions.</text>
</comment>
<comment type="disruption phenotype">
    <text evidence="3">Reduced number and length of lateral roots.</text>
</comment>
<comment type="sequence caution" evidence="5">
    <conflict type="erroneous initiation">
        <sequence resource="EMBL-CDS" id="AAD49976"/>
    </conflict>
    <text>Truncated N-terminus.</text>
</comment>
<comment type="sequence caution" evidence="5">
    <conflict type="erroneous initiation">
        <sequence resource="EMBL-CDS" id="AAM65539"/>
    </conflict>
    <text>Truncated N-terminus.</text>
</comment>
<name>HHO2_ARATH</name>
<reference key="1">
    <citation type="journal article" date="2000" name="Nature">
        <title>Sequence and analysis of chromosome 1 of the plant Arabidopsis thaliana.</title>
        <authorList>
            <person name="Theologis A."/>
            <person name="Ecker J.R."/>
            <person name="Palm C.J."/>
            <person name="Federspiel N.A."/>
            <person name="Kaul S."/>
            <person name="White O."/>
            <person name="Alonso J."/>
            <person name="Altafi H."/>
            <person name="Araujo R."/>
            <person name="Bowman C.L."/>
            <person name="Brooks S.Y."/>
            <person name="Buehler E."/>
            <person name="Chan A."/>
            <person name="Chao Q."/>
            <person name="Chen H."/>
            <person name="Cheuk R.F."/>
            <person name="Chin C.W."/>
            <person name="Chung M.K."/>
            <person name="Conn L."/>
            <person name="Conway A.B."/>
            <person name="Conway A.R."/>
            <person name="Creasy T.H."/>
            <person name="Dewar K."/>
            <person name="Dunn P."/>
            <person name="Etgu P."/>
            <person name="Feldblyum T.V."/>
            <person name="Feng J.-D."/>
            <person name="Fong B."/>
            <person name="Fujii C.Y."/>
            <person name="Gill J.E."/>
            <person name="Goldsmith A.D."/>
            <person name="Haas B."/>
            <person name="Hansen N.F."/>
            <person name="Hughes B."/>
            <person name="Huizar L."/>
            <person name="Hunter J.L."/>
            <person name="Jenkins J."/>
            <person name="Johnson-Hopson C."/>
            <person name="Khan S."/>
            <person name="Khaykin E."/>
            <person name="Kim C.J."/>
            <person name="Koo H.L."/>
            <person name="Kremenetskaia I."/>
            <person name="Kurtz D.B."/>
            <person name="Kwan A."/>
            <person name="Lam B."/>
            <person name="Langin-Hooper S."/>
            <person name="Lee A."/>
            <person name="Lee J.M."/>
            <person name="Lenz C.A."/>
            <person name="Li J.H."/>
            <person name="Li Y.-P."/>
            <person name="Lin X."/>
            <person name="Liu S.X."/>
            <person name="Liu Z.A."/>
            <person name="Luros J.S."/>
            <person name="Maiti R."/>
            <person name="Marziali A."/>
            <person name="Militscher J."/>
            <person name="Miranda M."/>
            <person name="Nguyen M."/>
            <person name="Nierman W.C."/>
            <person name="Osborne B.I."/>
            <person name="Pai G."/>
            <person name="Peterson J."/>
            <person name="Pham P.K."/>
            <person name="Rizzo M."/>
            <person name="Rooney T."/>
            <person name="Rowley D."/>
            <person name="Sakano H."/>
            <person name="Salzberg S.L."/>
            <person name="Schwartz J.R."/>
            <person name="Shinn P."/>
            <person name="Southwick A.M."/>
            <person name="Sun H."/>
            <person name="Tallon L.J."/>
            <person name="Tambunga G."/>
            <person name="Toriumi M.J."/>
            <person name="Town C.D."/>
            <person name="Utterback T."/>
            <person name="Van Aken S."/>
            <person name="Vaysberg M."/>
            <person name="Vysotskaia V.S."/>
            <person name="Walker M."/>
            <person name="Wu D."/>
            <person name="Yu G."/>
            <person name="Fraser C.M."/>
            <person name="Venter J.C."/>
            <person name="Davis R.W."/>
        </authorList>
    </citation>
    <scope>NUCLEOTIDE SEQUENCE [LARGE SCALE GENOMIC DNA]</scope>
    <source>
        <strain>cv. Columbia</strain>
    </source>
</reference>
<reference key="2">
    <citation type="journal article" date="2017" name="Plant J.">
        <title>Araport11: a complete reannotation of the Arabidopsis thaliana reference genome.</title>
        <authorList>
            <person name="Cheng C.Y."/>
            <person name="Krishnakumar V."/>
            <person name="Chan A.P."/>
            <person name="Thibaud-Nissen F."/>
            <person name="Schobel S."/>
            <person name="Town C.D."/>
        </authorList>
    </citation>
    <scope>GENOME REANNOTATION</scope>
    <source>
        <strain>cv. Columbia</strain>
    </source>
</reference>
<reference key="3">
    <citation type="journal article" date="2003" name="Science">
        <title>Empirical analysis of transcriptional activity in the Arabidopsis genome.</title>
        <authorList>
            <person name="Yamada K."/>
            <person name="Lim J."/>
            <person name="Dale J.M."/>
            <person name="Chen H."/>
            <person name="Shinn P."/>
            <person name="Palm C.J."/>
            <person name="Southwick A.M."/>
            <person name="Wu H.C."/>
            <person name="Kim C.J."/>
            <person name="Nguyen M."/>
            <person name="Pham P.K."/>
            <person name="Cheuk R.F."/>
            <person name="Karlin-Newmann G."/>
            <person name="Liu S.X."/>
            <person name="Lam B."/>
            <person name="Sakano H."/>
            <person name="Wu T."/>
            <person name="Yu G."/>
            <person name="Miranda M."/>
            <person name="Quach H.L."/>
            <person name="Tripp M."/>
            <person name="Chang C.H."/>
            <person name="Lee J.M."/>
            <person name="Toriumi M.J."/>
            <person name="Chan M.M."/>
            <person name="Tang C.C."/>
            <person name="Onodera C.S."/>
            <person name="Deng J.M."/>
            <person name="Akiyama K."/>
            <person name="Ansari Y."/>
            <person name="Arakawa T."/>
            <person name="Banh J."/>
            <person name="Banno F."/>
            <person name="Bowser L."/>
            <person name="Brooks S.Y."/>
            <person name="Carninci P."/>
            <person name="Chao Q."/>
            <person name="Choy N."/>
            <person name="Enju A."/>
            <person name="Goldsmith A.D."/>
            <person name="Gurjal M."/>
            <person name="Hansen N.F."/>
            <person name="Hayashizaki Y."/>
            <person name="Johnson-Hopson C."/>
            <person name="Hsuan V.W."/>
            <person name="Iida K."/>
            <person name="Karnes M."/>
            <person name="Khan S."/>
            <person name="Koesema E."/>
            <person name="Ishida J."/>
            <person name="Jiang P.X."/>
            <person name="Jones T."/>
            <person name="Kawai J."/>
            <person name="Kamiya A."/>
            <person name="Meyers C."/>
            <person name="Nakajima M."/>
            <person name="Narusaka M."/>
            <person name="Seki M."/>
            <person name="Sakurai T."/>
            <person name="Satou M."/>
            <person name="Tamse R."/>
            <person name="Vaysberg M."/>
            <person name="Wallender E.K."/>
            <person name="Wong C."/>
            <person name="Yamamura Y."/>
            <person name="Yuan S."/>
            <person name="Shinozaki K."/>
            <person name="Davis R.W."/>
            <person name="Theologis A."/>
            <person name="Ecker J.R."/>
        </authorList>
    </citation>
    <scope>NUCLEOTIDE SEQUENCE [LARGE SCALE MRNA]</scope>
    <source>
        <strain>cv. Columbia</strain>
    </source>
</reference>
<reference key="4">
    <citation type="submission" date="2002-03" db="EMBL/GenBank/DDBJ databases">
        <title>Full-length cDNA from Arabidopsis thaliana.</title>
        <authorList>
            <person name="Brover V.V."/>
            <person name="Troukhan M.E."/>
            <person name="Alexandrov N.A."/>
            <person name="Lu Y.-P."/>
            <person name="Flavell R.B."/>
            <person name="Feldmann K.A."/>
        </authorList>
    </citation>
    <scope>NUCLEOTIDE SEQUENCE [LARGE SCALE MRNA]</scope>
</reference>
<reference key="5">
    <citation type="journal article" date="2016" name="Plant Cell Physiol.">
        <title>Arabidopsis MYB-related HHO2 exerts a regulatory influence on a subset of root traits and genes governing phosphate homeostasis.</title>
        <authorList>
            <person name="Nagarajan V.K."/>
            <person name="Satheesh V."/>
            <person name="Poling M.D."/>
            <person name="Raghothama K.G."/>
            <person name="Jain A."/>
        </authorList>
    </citation>
    <scope>FUNCTION</scope>
    <scope>SUBCELLULAR LOCATION</scope>
    <scope>INDUCTION</scope>
    <scope>DISRUPTION PHENOTYPE</scope>
</reference>
<accession>Q8VZS3</accession>
<accession>Q8LA71</accession>
<accession>Q9SX30</accession>
<dbReference type="EMBL" id="AC008075">
    <property type="protein sequence ID" value="AAD49976.1"/>
    <property type="status" value="ALT_INIT"/>
    <property type="molecule type" value="Genomic_DNA"/>
</dbReference>
<dbReference type="EMBL" id="CP002684">
    <property type="protein sequence ID" value="AEE34826.1"/>
    <property type="molecule type" value="Genomic_DNA"/>
</dbReference>
<dbReference type="EMBL" id="AY063886">
    <property type="protein sequence ID" value="AAL36242.1"/>
    <property type="molecule type" value="mRNA"/>
</dbReference>
<dbReference type="EMBL" id="AY091241">
    <property type="protein sequence ID" value="AAM14180.1"/>
    <property type="molecule type" value="mRNA"/>
</dbReference>
<dbReference type="EMBL" id="AY087993">
    <property type="protein sequence ID" value="AAM65539.1"/>
    <property type="status" value="ALT_INIT"/>
    <property type="molecule type" value="mRNA"/>
</dbReference>
<dbReference type="PIR" id="C96711">
    <property type="entry name" value="C96711"/>
</dbReference>
<dbReference type="RefSeq" id="NP_564938.1">
    <property type="nucleotide sequence ID" value="NM_105539.4"/>
</dbReference>
<dbReference type="SMR" id="Q8VZS3"/>
<dbReference type="FunCoup" id="Q8VZS3">
    <property type="interactions" value="598"/>
</dbReference>
<dbReference type="IntAct" id="Q8VZS3">
    <property type="interactions" value="25"/>
</dbReference>
<dbReference type="STRING" id="3702.Q8VZS3"/>
<dbReference type="iPTMnet" id="Q8VZS3"/>
<dbReference type="PaxDb" id="3702-AT1G68670.1"/>
<dbReference type="ProteomicsDB" id="230319"/>
<dbReference type="EnsemblPlants" id="AT1G68670.1">
    <property type="protein sequence ID" value="AT1G68670.1"/>
    <property type="gene ID" value="AT1G68670"/>
</dbReference>
<dbReference type="GeneID" id="843197"/>
<dbReference type="Gramene" id="AT1G68670.1">
    <property type="protein sequence ID" value="AT1G68670.1"/>
    <property type="gene ID" value="AT1G68670"/>
</dbReference>
<dbReference type="KEGG" id="ath:AT1G68670"/>
<dbReference type="Araport" id="AT1G68670"/>
<dbReference type="TAIR" id="AT1G68670">
    <property type="gene designation" value="HHO2"/>
</dbReference>
<dbReference type="eggNOG" id="ENOG502QSXV">
    <property type="taxonomic scope" value="Eukaryota"/>
</dbReference>
<dbReference type="HOGENOM" id="CLU_036551_0_0_1"/>
<dbReference type="InParanoid" id="Q8VZS3"/>
<dbReference type="OMA" id="ETCGVGK"/>
<dbReference type="OrthoDB" id="1908613at2759"/>
<dbReference type="PhylomeDB" id="Q8VZS3"/>
<dbReference type="PRO" id="PR:Q8VZS3"/>
<dbReference type="Proteomes" id="UP000006548">
    <property type="component" value="Chromosome 1"/>
</dbReference>
<dbReference type="ExpressionAtlas" id="Q8VZS3">
    <property type="expression patterns" value="baseline and differential"/>
</dbReference>
<dbReference type="GO" id="GO:0005634">
    <property type="term" value="C:nucleus"/>
    <property type="evidence" value="ECO:0000314"/>
    <property type="project" value="TAIR"/>
</dbReference>
<dbReference type="GO" id="GO:0003700">
    <property type="term" value="F:DNA-binding transcription factor activity"/>
    <property type="evidence" value="ECO:0000314"/>
    <property type="project" value="TAIR"/>
</dbReference>
<dbReference type="GO" id="GO:0001217">
    <property type="term" value="F:DNA-binding transcription repressor activity"/>
    <property type="evidence" value="ECO:0000314"/>
    <property type="project" value="TAIR"/>
</dbReference>
<dbReference type="GO" id="GO:0000976">
    <property type="term" value="F:transcription cis-regulatory region binding"/>
    <property type="evidence" value="ECO:0000353"/>
    <property type="project" value="TAIR"/>
</dbReference>
<dbReference type="GO" id="GO:0071456">
    <property type="term" value="P:cellular response to hypoxia"/>
    <property type="evidence" value="ECO:0007007"/>
    <property type="project" value="TAIR"/>
</dbReference>
<dbReference type="GO" id="GO:0055062">
    <property type="term" value="P:phosphate ion homeostasis"/>
    <property type="evidence" value="ECO:0000315"/>
    <property type="project" value="TAIR"/>
</dbReference>
<dbReference type="GO" id="GO:0006355">
    <property type="term" value="P:regulation of DNA-templated transcription"/>
    <property type="evidence" value="ECO:0000304"/>
    <property type="project" value="TAIR"/>
</dbReference>
<dbReference type="GO" id="GO:0009737">
    <property type="term" value="P:response to abscisic acid"/>
    <property type="evidence" value="ECO:0000315"/>
    <property type="project" value="TAIR"/>
</dbReference>
<dbReference type="FunFam" id="1.10.10.60:FF:000002">
    <property type="entry name" value="Myb family transcription factor"/>
    <property type="match status" value="1"/>
</dbReference>
<dbReference type="Gene3D" id="1.10.10.60">
    <property type="entry name" value="Homeodomain-like"/>
    <property type="match status" value="1"/>
</dbReference>
<dbReference type="InterPro" id="IPR009057">
    <property type="entry name" value="Homeodomain-like_sf"/>
</dbReference>
<dbReference type="InterPro" id="IPR044787">
    <property type="entry name" value="HRS1-like"/>
</dbReference>
<dbReference type="InterPro" id="IPR017930">
    <property type="entry name" value="Myb_dom"/>
</dbReference>
<dbReference type="InterPro" id="IPR006447">
    <property type="entry name" value="Myb_dom_plants"/>
</dbReference>
<dbReference type="InterPro" id="IPR001005">
    <property type="entry name" value="SANT/Myb"/>
</dbReference>
<dbReference type="NCBIfam" id="TIGR01557">
    <property type="entry name" value="myb_SHAQKYF"/>
    <property type="match status" value="1"/>
</dbReference>
<dbReference type="PANTHER" id="PTHR31003">
    <property type="entry name" value="MYB FAMILY TRANSCRIPTION FACTOR"/>
    <property type="match status" value="1"/>
</dbReference>
<dbReference type="PANTHER" id="PTHR31003:SF16">
    <property type="entry name" value="TRANSCRIPTION FACTOR HHO2"/>
    <property type="match status" value="1"/>
</dbReference>
<dbReference type="Pfam" id="PF00249">
    <property type="entry name" value="Myb_DNA-binding"/>
    <property type="match status" value="1"/>
</dbReference>
<dbReference type="SUPFAM" id="SSF46689">
    <property type="entry name" value="Homeodomain-like"/>
    <property type="match status" value="1"/>
</dbReference>
<dbReference type="PROSITE" id="PS51294">
    <property type="entry name" value="HTH_MYB"/>
    <property type="match status" value="1"/>
</dbReference>
<feature type="chain" id="PRO_0000439545" description="Transcription factor HHO2">
    <location>
        <begin position="1"/>
        <end position="354"/>
    </location>
</feature>
<feature type="domain" description="HTH myb-type" evidence="1">
    <location>
        <begin position="212"/>
        <end position="272"/>
    </location>
</feature>
<feature type="DNA-binding region" description="H-T-H motif" evidence="1">
    <location>
        <begin position="243"/>
        <end position="268"/>
    </location>
</feature>
<feature type="region of interest" description="Disordered" evidence="2">
    <location>
        <begin position="93"/>
        <end position="112"/>
    </location>
</feature>
<feature type="region of interest" description="Disordered" evidence="2">
    <location>
        <begin position="324"/>
        <end position="354"/>
    </location>
</feature>
<feature type="compositionally biased region" description="Acidic residues" evidence="2">
    <location>
        <begin position="93"/>
        <end position="102"/>
    </location>
</feature>
<feature type="compositionally biased region" description="Basic and acidic residues" evidence="2">
    <location>
        <begin position="103"/>
        <end position="112"/>
    </location>
</feature>
<feature type="compositionally biased region" description="Low complexity" evidence="2">
    <location>
        <begin position="337"/>
        <end position="354"/>
    </location>
</feature>
<sequence length="354" mass="39424">MMVEMDYAKKMQKCHEYVEALEEEQKKIQVFQRELPLCLELVTQAIEACRKELSGTTTTTSEQCSEQTTSVCGGPVFEEFIPIKKISSLCEEVQEEEEEDGEHESSPELVNNKKSDWLRSVQLWNHSPDLNPKEERVAKKAKVVEVKPKSGAFQPFQKRVLETDLQPAVKVASSMPATTTSSTTETCGGKSDLIKAGDEERRIEQQQSQSHTHRKQRRCWSPELHRRFLNALQQLGGSHVATPKQIRDHMKVDGLTNDEVKSHLQKYRLHTRRPAATSVAAQSTGNQQQPQFVVVGGIWVPSSQDFPPPSDVANKGGVYAPVAVAQSPKRSLERSCNSPAASSSTNTNTSTPVS</sequence>
<proteinExistence type="evidence at protein level"/>
<evidence type="ECO:0000255" key="1">
    <source>
        <dbReference type="PROSITE-ProRule" id="PRU00625"/>
    </source>
</evidence>
<evidence type="ECO:0000256" key="2">
    <source>
        <dbReference type="SAM" id="MobiDB-lite"/>
    </source>
</evidence>
<evidence type="ECO:0000269" key="3">
    <source>
    </source>
</evidence>
<evidence type="ECO:0000303" key="4">
    <source>
    </source>
</evidence>
<evidence type="ECO:0000305" key="5"/>
<evidence type="ECO:0000312" key="6">
    <source>
        <dbReference type="Araport" id="AT1G68670"/>
    </source>
</evidence>
<evidence type="ECO:0000312" key="7">
    <source>
        <dbReference type="EMBL" id="AAD49976.1"/>
    </source>
</evidence>
<keyword id="KW-0238">DNA-binding</keyword>
<keyword id="KW-0539">Nucleus</keyword>
<keyword id="KW-1185">Reference proteome</keyword>
<keyword id="KW-0804">Transcription</keyword>
<keyword id="KW-0805">Transcription regulation</keyword>
<protein>
    <recommendedName>
        <fullName evidence="5">Transcription factor HHO2</fullName>
    </recommendedName>
    <alternativeName>
        <fullName evidence="5">MYB-domain transcription factor HHO2</fullName>
    </alternativeName>
    <alternativeName>
        <fullName evidence="4">Protein HRS1 HOMOLOG 2</fullName>
    </alternativeName>
</protein>
<gene>
    <name evidence="4" type="primary">HHO2</name>
    <name evidence="6" type="ordered locus">At1g68670</name>
    <name evidence="7" type="ORF">F24J5.9</name>
</gene>